<sequence>MFTLKKSLLLLFFLGTINLSLCEQERNAEEERRDDLGERQAEVEKRFFPIVGKLLSG</sequence>
<protein>
    <recommendedName>
        <fullName evidence="3">Temporin-ALk</fullName>
    </recommendedName>
    <alternativeName>
        <fullName evidence="6">Amolopin-n1</fullName>
    </alternativeName>
</protein>
<keyword id="KW-0027">Amidation</keyword>
<keyword id="KW-0878">Amphibian defense peptide</keyword>
<keyword id="KW-0044">Antibiotic</keyword>
<keyword id="KW-0929">Antimicrobial</keyword>
<keyword id="KW-0165">Cleavage on pair of basic residues</keyword>
<keyword id="KW-0295">Fungicide</keyword>
<keyword id="KW-0391">Immunity</keyword>
<keyword id="KW-0399">Innate immunity</keyword>
<keyword id="KW-0964">Secreted</keyword>
<keyword id="KW-0732">Signal</keyword>
<proteinExistence type="evidence at protein level"/>
<dbReference type="EMBL" id="EU311555">
    <property type="protein sequence ID" value="ACA09645.1"/>
    <property type="molecule type" value="mRNA"/>
</dbReference>
<dbReference type="GO" id="GO:0005576">
    <property type="term" value="C:extracellular region"/>
    <property type="evidence" value="ECO:0007669"/>
    <property type="project" value="UniProtKB-SubCell"/>
</dbReference>
<dbReference type="GO" id="GO:0042742">
    <property type="term" value="P:defense response to bacterium"/>
    <property type="evidence" value="ECO:0007669"/>
    <property type="project" value="UniProtKB-KW"/>
</dbReference>
<dbReference type="GO" id="GO:0050832">
    <property type="term" value="P:defense response to fungus"/>
    <property type="evidence" value="ECO:0007669"/>
    <property type="project" value="UniProtKB-KW"/>
</dbReference>
<dbReference type="GO" id="GO:0045087">
    <property type="term" value="P:innate immune response"/>
    <property type="evidence" value="ECO:0007669"/>
    <property type="project" value="UniProtKB-KW"/>
</dbReference>
<dbReference type="GO" id="GO:0031640">
    <property type="term" value="P:killing of cells of another organism"/>
    <property type="evidence" value="ECO:0007669"/>
    <property type="project" value="UniProtKB-KW"/>
</dbReference>
<dbReference type="InterPro" id="IPR004275">
    <property type="entry name" value="Frog_antimicrobial_propeptide"/>
</dbReference>
<dbReference type="Pfam" id="PF03032">
    <property type="entry name" value="FSAP_sig_propep"/>
    <property type="match status" value="1"/>
</dbReference>
<organism>
    <name type="scientific">Amolops loloensis</name>
    <name type="common">Lolokou Sucker Frog</name>
    <name type="synonym">Staurois loloensis</name>
    <dbReference type="NCBI Taxonomy" id="318551"/>
    <lineage>
        <taxon>Eukaryota</taxon>
        <taxon>Metazoa</taxon>
        <taxon>Chordata</taxon>
        <taxon>Craniata</taxon>
        <taxon>Vertebrata</taxon>
        <taxon>Euteleostomi</taxon>
        <taxon>Amphibia</taxon>
        <taxon>Batrachia</taxon>
        <taxon>Anura</taxon>
        <taxon>Neobatrachia</taxon>
        <taxon>Ranoidea</taxon>
        <taxon>Ranidae</taxon>
        <taxon>Amolops</taxon>
    </lineage>
</organism>
<evidence type="ECO:0000255" key="1"/>
<evidence type="ECO:0000269" key="2">
    <source>
    </source>
</evidence>
<evidence type="ECO:0000303" key="3">
    <source>
    </source>
</evidence>
<evidence type="ECO:0000305" key="4"/>
<evidence type="ECO:0000305" key="5">
    <source>
    </source>
</evidence>
<evidence type="ECO:0000312" key="6">
    <source>
        <dbReference type="EMBL" id="ACA09645.1"/>
    </source>
</evidence>
<reference key="1">
    <citation type="journal article" date="2010" name="Comp. Biochem. Physiol.">
        <title>Five novel antimicrobial peptides from skin secretions of the frog, Amolops loloensis.</title>
        <authorList>
            <person name="Wang M."/>
            <person name="Wang Y."/>
            <person name="Wang A."/>
            <person name="Song Y."/>
            <person name="Ma D."/>
            <person name="Yang H."/>
            <person name="Ma Y."/>
            <person name="Lai R."/>
        </authorList>
    </citation>
    <scope>NUCLEOTIDE SEQUENCE [MRNA]</scope>
    <scope>FUNCTION</scope>
    <scope>AMIDATION AT SER-56</scope>
    <scope>SYNTHESIS OF 47-56</scope>
    <source>
        <tissue>Skin</tissue>
    </source>
</reference>
<feature type="signal peptide" evidence="1">
    <location>
        <begin position="1"/>
        <end position="22"/>
    </location>
</feature>
<feature type="propeptide" id="PRO_0000450011" evidence="5">
    <location>
        <begin position="23"/>
        <end position="46"/>
    </location>
</feature>
<feature type="peptide" id="PRO_5005668332" description="Temporin-ALk" evidence="5">
    <location>
        <begin position="47"/>
        <end position="56"/>
    </location>
</feature>
<feature type="modified residue" description="Serine amide" evidence="5">
    <location>
        <position position="56"/>
    </location>
</feature>
<name>TPK_AMOLO</name>
<comment type="function">
    <text evidence="2">Antimicrobial peptide with weak activity against Gram-positive and Gram-negative bacteria and against fungi (PubMed:19843479). Has been tested against S.aureus (MIC=15.0 ug/mL), B.pumilus (no activity detected), B.cereus (no activity detected), E.coli (MIC=30.0 ug/mL), B.dysenteriae (MIC=60.0 ug/mL), A.cacoaceticus (MIC=75.0 ug/mL), P.aeruginosa (MIC=25.0 ug/mL) and C.albicans (MIC=15.0 ug/mL) (PubMed:19843479). Also shows a weak hemolytic activity (PubMed:19843479).</text>
</comment>
<comment type="subcellular location">
    <subcellularLocation>
        <location evidence="5">Secreted</location>
    </subcellularLocation>
</comment>
<comment type="tissue specificity">
    <text evidence="5">Expressed by the skin glands.</text>
</comment>
<comment type="similarity">
    <text evidence="4">Belongs to the frog skin active peptide (FSAP) family. Temporin subfamily.</text>
</comment>
<comment type="online information" name="The antimicrobial peptide database">
    <link uri="https://wangapd3.com/database/query_output.php?ID=01938"/>
</comment>
<accession>C5H0E2</accession>